<gene>
    <name type="primary">alaS</name>
    <name type="ordered locus">AF_2255</name>
</gene>
<keyword id="KW-0002">3D-structure</keyword>
<keyword id="KW-0030">Aminoacyl-tRNA synthetase</keyword>
<keyword id="KW-0067">ATP-binding</keyword>
<keyword id="KW-0963">Cytoplasm</keyword>
<keyword id="KW-0436">Ligase</keyword>
<keyword id="KW-0479">Metal-binding</keyword>
<keyword id="KW-0547">Nucleotide-binding</keyword>
<keyword id="KW-0648">Protein biosynthesis</keyword>
<keyword id="KW-1185">Reference proteome</keyword>
<keyword id="KW-0694">RNA-binding</keyword>
<keyword id="KW-0820">tRNA-binding</keyword>
<keyword id="KW-0862">Zinc</keyword>
<reference key="1">
    <citation type="journal article" date="1997" name="Nature">
        <title>The complete genome sequence of the hyperthermophilic, sulphate-reducing archaeon Archaeoglobus fulgidus.</title>
        <authorList>
            <person name="Klenk H.-P."/>
            <person name="Clayton R.A."/>
            <person name="Tomb J.-F."/>
            <person name="White O."/>
            <person name="Nelson K.E."/>
            <person name="Ketchum K.A."/>
            <person name="Dodson R.J."/>
            <person name="Gwinn M.L."/>
            <person name="Hickey E.K."/>
            <person name="Peterson J.D."/>
            <person name="Richardson D.L."/>
            <person name="Kerlavage A.R."/>
            <person name="Graham D.E."/>
            <person name="Kyrpides N.C."/>
            <person name="Fleischmann R.D."/>
            <person name="Quackenbush J."/>
            <person name="Lee N.H."/>
            <person name="Sutton G.G."/>
            <person name="Gill S.R."/>
            <person name="Kirkness E.F."/>
            <person name="Dougherty B.A."/>
            <person name="McKenney K."/>
            <person name="Adams M.D."/>
            <person name="Loftus B.J."/>
            <person name="Peterson S.N."/>
            <person name="Reich C.I."/>
            <person name="McNeil L.K."/>
            <person name="Badger J.H."/>
            <person name="Glodek A."/>
            <person name="Zhou L."/>
            <person name="Overbeek R."/>
            <person name="Gocayne J.D."/>
            <person name="Weidman J.F."/>
            <person name="McDonald L.A."/>
            <person name="Utterback T.R."/>
            <person name="Cotton M.D."/>
            <person name="Spriggs T."/>
            <person name="Artiach P."/>
            <person name="Kaine B.P."/>
            <person name="Sykes S.M."/>
            <person name="Sadow P.W."/>
            <person name="D'Andrea K.P."/>
            <person name="Bowman C."/>
            <person name="Fujii C."/>
            <person name="Garland S.A."/>
            <person name="Mason T.M."/>
            <person name="Olsen G.J."/>
            <person name="Fraser C.M."/>
            <person name="Smith H.O."/>
            <person name="Woese C.R."/>
            <person name="Venter J.C."/>
        </authorList>
    </citation>
    <scope>NUCLEOTIDE SEQUENCE [LARGE SCALE GENOMIC DNA]</scope>
    <source>
        <strain>ATCC 49558 / DSM 4304 / JCM 9628 / NBRC 100126 / VC-16</strain>
    </source>
</reference>
<reference key="2">
    <citation type="journal article" date="2007" name="Acta Crystallogr. D">
        <title>Structure of the AlaX-M trans-editing enzyme from Pyrococcus horikoshii.</title>
        <authorList>
            <person name="Fukunaga R."/>
            <person name="Yokoyama S."/>
        </authorList>
    </citation>
    <scope>MUTAGENESIS OF CYS-703</scope>
</reference>
<reference key="3">
    <citation type="journal article" date="2009" name="Proc. Natl. Acad. Sci. U.S.A.">
        <title>Unique protein architecture of alanyl-tRNA synthetase for aminoacylation, editing, and dimerization.</title>
        <authorList>
            <person name="Naganuma M."/>
            <person name="Sekine S."/>
            <person name="Fukunaga R."/>
            <person name="Yokoyama S."/>
        </authorList>
    </citation>
    <scope>X-RAY CRYSTALLOGRAPHY (2.2 ANGSTROMS) OF 1-739 WITH AN ALANYL-ADENYLATE ANALOG</scope>
    <scope>X-RAY CRYSTALLOGRAPHY (3.2 ANGSTROMS) OF 737-906</scope>
    <scope>FUNCTION</scope>
    <scope>ZINC-BINDING</scope>
    <scope>COFACTOR</scope>
    <scope>SUBUNIT</scope>
    <scope>DOMAIN</scope>
</reference>
<evidence type="ECO:0000250" key="1"/>
<evidence type="ECO:0000269" key="2">
    <source>
    </source>
</evidence>
<evidence type="ECO:0000269" key="3">
    <source>
    </source>
</evidence>
<evidence type="ECO:0000305" key="4"/>
<evidence type="ECO:0007829" key="5">
    <source>
        <dbReference type="PDB" id="2ZTG"/>
    </source>
</evidence>
<evidence type="ECO:0007829" key="6">
    <source>
        <dbReference type="PDB" id="2ZVF"/>
    </source>
</evidence>
<evidence type="ECO:0007829" key="7">
    <source>
        <dbReference type="PDB" id="3WQY"/>
    </source>
</evidence>
<evidence type="ECO:0007829" key="8">
    <source>
        <dbReference type="PDB" id="3WQZ"/>
    </source>
</evidence>
<name>SYA_ARCFU</name>
<dbReference type="EC" id="6.1.1.7"/>
<dbReference type="EMBL" id="AE000782">
    <property type="protein sequence ID" value="AAB89002.1"/>
    <property type="molecule type" value="Genomic_DNA"/>
</dbReference>
<dbReference type="PIR" id="G69531">
    <property type="entry name" value="G69531"/>
</dbReference>
<dbReference type="RefSeq" id="WP_010879744.1">
    <property type="nucleotide sequence ID" value="NC_000917.1"/>
</dbReference>
<dbReference type="PDB" id="2ZTG">
    <property type="method" value="X-ray"/>
    <property type="resolution" value="2.20 A"/>
    <property type="chains" value="A=1-739"/>
</dbReference>
<dbReference type="PDB" id="2ZVF">
    <property type="method" value="X-ray"/>
    <property type="resolution" value="3.20 A"/>
    <property type="chains" value="A/B/C/D/E/F/G/H=737-906"/>
</dbReference>
<dbReference type="PDB" id="3WQY">
    <property type="method" value="X-ray"/>
    <property type="resolution" value="3.30 A"/>
    <property type="chains" value="A/B=1-906"/>
</dbReference>
<dbReference type="PDB" id="3WQZ">
    <property type="method" value="X-ray"/>
    <property type="resolution" value="3.49 A"/>
    <property type="chains" value="A/B=1-906"/>
</dbReference>
<dbReference type="PDBsum" id="2ZTG"/>
<dbReference type="PDBsum" id="2ZVF"/>
<dbReference type="PDBsum" id="3WQY"/>
<dbReference type="PDBsum" id="3WQZ"/>
<dbReference type="SMR" id="O28029"/>
<dbReference type="DIP" id="DIP-48856N"/>
<dbReference type="STRING" id="224325.AF_2255"/>
<dbReference type="PaxDb" id="224325-AF_2255"/>
<dbReference type="EnsemblBacteria" id="AAB89002">
    <property type="protein sequence ID" value="AAB89002"/>
    <property type="gene ID" value="AF_2255"/>
</dbReference>
<dbReference type="GeneID" id="24796018"/>
<dbReference type="KEGG" id="afu:AF_2255"/>
<dbReference type="eggNOG" id="arCOG01255">
    <property type="taxonomic scope" value="Archaea"/>
</dbReference>
<dbReference type="HOGENOM" id="CLU_004485_4_0_2"/>
<dbReference type="OrthoDB" id="7506at2157"/>
<dbReference type="PhylomeDB" id="O28029"/>
<dbReference type="BRENDA" id="6.1.1.7">
    <property type="organism ID" value="414"/>
</dbReference>
<dbReference type="EvolutionaryTrace" id="O28029"/>
<dbReference type="Proteomes" id="UP000002199">
    <property type="component" value="Chromosome"/>
</dbReference>
<dbReference type="GO" id="GO:0005737">
    <property type="term" value="C:cytoplasm"/>
    <property type="evidence" value="ECO:0007669"/>
    <property type="project" value="UniProtKB-SubCell"/>
</dbReference>
<dbReference type="GO" id="GO:0004813">
    <property type="term" value="F:alanine-tRNA ligase activity"/>
    <property type="evidence" value="ECO:0007669"/>
    <property type="project" value="UniProtKB-UniRule"/>
</dbReference>
<dbReference type="GO" id="GO:0002161">
    <property type="term" value="F:aminoacyl-tRNA deacylase activity"/>
    <property type="evidence" value="ECO:0000315"/>
    <property type="project" value="UniProtKB"/>
</dbReference>
<dbReference type="GO" id="GO:0005524">
    <property type="term" value="F:ATP binding"/>
    <property type="evidence" value="ECO:0007669"/>
    <property type="project" value="UniProtKB-UniRule"/>
</dbReference>
<dbReference type="GO" id="GO:0042802">
    <property type="term" value="F:identical protein binding"/>
    <property type="evidence" value="ECO:0000353"/>
    <property type="project" value="IntAct"/>
</dbReference>
<dbReference type="GO" id="GO:0000049">
    <property type="term" value="F:tRNA binding"/>
    <property type="evidence" value="ECO:0007669"/>
    <property type="project" value="UniProtKB-KW"/>
</dbReference>
<dbReference type="GO" id="GO:0008270">
    <property type="term" value="F:zinc ion binding"/>
    <property type="evidence" value="ECO:0007669"/>
    <property type="project" value="UniProtKB-UniRule"/>
</dbReference>
<dbReference type="GO" id="GO:0006419">
    <property type="term" value="P:alanyl-tRNA aminoacylation"/>
    <property type="evidence" value="ECO:0000315"/>
    <property type="project" value="UniProtKB"/>
</dbReference>
<dbReference type="CDD" id="cd00673">
    <property type="entry name" value="AlaRS_core"/>
    <property type="match status" value="1"/>
</dbReference>
<dbReference type="FunFam" id="2.40.30.130:FF:000010">
    <property type="entry name" value="Alanine--tRNA ligase"/>
    <property type="match status" value="1"/>
</dbReference>
<dbReference type="FunFam" id="3.10.310.40:FF:000001">
    <property type="entry name" value="Alanine--tRNA ligase"/>
    <property type="match status" value="1"/>
</dbReference>
<dbReference type="FunFam" id="3.30.54.20:FF:000005">
    <property type="entry name" value="Alanine--tRNA ligase"/>
    <property type="match status" value="1"/>
</dbReference>
<dbReference type="FunFam" id="3.30.930.10:FF:000056">
    <property type="entry name" value="Alanine--tRNA ligase"/>
    <property type="match status" value="1"/>
</dbReference>
<dbReference type="FunFam" id="3.30.980.10:FF:000002">
    <property type="entry name" value="Alanine--tRNA ligase"/>
    <property type="match status" value="1"/>
</dbReference>
<dbReference type="Gene3D" id="2.40.30.130">
    <property type="match status" value="1"/>
</dbReference>
<dbReference type="Gene3D" id="3.10.310.40">
    <property type="match status" value="1"/>
</dbReference>
<dbReference type="Gene3D" id="3.30.54.20">
    <property type="match status" value="1"/>
</dbReference>
<dbReference type="Gene3D" id="6.10.250.550">
    <property type="match status" value="1"/>
</dbReference>
<dbReference type="Gene3D" id="3.30.930.10">
    <property type="entry name" value="Bira Bifunctional Protein, Domain 2"/>
    <property type="match status" value="1"/>
</dbReference>
<dbReference type="Gene3D" id="3.30.980.10">
    <property type="entry name" value="Threonyl-trna Synthetase, Chain A, domain 2"/>
    <property type="match status" value="1"/>
</dbReference>
<dbReference type="HAMAP" id="MF_00036_A">
    <property type="entry name" value="Ala_tRNA_synth_A"/>
    <property type="match status" value="1"/>
</dbReference>
<dbReference type="InterPro" id="IPR045864">
    <property type="entry name" value="aa-tRNA-synth_II/BPL/LPL"/>
</dbReference>
<dbReference type="InterPro" id="IPR002318">
    <property type="entry name" value="Ala-tRNA-lgiase_IIc"/>
</dbReference>
<dbReference type="InterPro" id="IPR018162">
    <property type="entry name" value="Ala-tRNA-ligase_IIc_anticod-bd"/>
</dbReference>
<dbReference type="InterPro" id="IPR018165">
    <property type="entry name" value="Ala-tRNA-synth_IIc_core"/>
</dbReference>
<dbReference type="InterPro" id="IPR018164">
    <property type="entry name" value="Ala-tRNA-synth_IIc_N"/>
</dbReference>
<dbReference type="InterPro" id="IPR022429">
    <property type="entry name" value="Ala-tRNA_lgiase_arc"/>
</dbReference>
<dbReference type="InterPro" id="IPR050058">
    <property type="entry name" value="Ala-tRNA_ligase"/>
</dbReference>
<dbReference type="InterPro" id="IPR003156">
    <property type="entry name" value="DHHA1_dom"/>
</dbReference>
<dbReference type="InterPro" id="IPR018163">
    <property type="entry name" value="Thr/Ala-tRNA-synth_IIc_edit"/>
</dbReference>
<dbReference type="InterPro" id="IPR009000">
    <property type="entry name" value="Transl_B-barrel_sf"/>
</dbReference>
<dbReference type="InterPro" id="IPR012947">
    <property type="entry name" value="tRNA_SAD"/>
</dbReference>
<dbReference type="NCBIfam" id="TIGR03683">
    <property type="entry name" value="A-tRNA_syn_arch"/>
    <property type="match status" value="1"/>
</dbReference>
<dbReference type="NCBIfam" id="TIGR00344">
    <property type="entry name" value="alaS"/>
    <property type="match status" value="1"/>
</dbReference>
<dbReference type="PANTHER" id="PTHR11777:SF9">
    <property type="entry name" value="ALANINE--TRNA LIGASE, CYTOPLASMIC"/>
    <property type="match status" value="1"/>
</dbReference>
<dbReference type="PANTHER" id="PTHR11777">
    <property type="entry name" value="ALANYL-TRNA SYNTHETASE"/>
    <property type="match status" value="1"/>
</dbReference>
<dbReference type="Pfam" id="PF02272">
    <property type="entry name" value="DHHA1"/>
    <property type="match status" value="1"/>
</dbReference>
<dbReference type="Pfam" id="PF01411">
    <property type="entry name" value="tRNA-synt_2c"/>
    <property type="match status" value="1"/>
</dbReference>
<dbReference type="Pfam" id="PF07973">
    <property type="entry name" value="tRNA_SAD"/>
    <property type="match status" value="1"/>
</dbReference>
<dbReference type="PRINTS" id="PR00980">
    <property type="entry name" value="TRNASYNTHALA"/>
</dbReference>
<dbReference type="SMART" id="SM00863">
    <property type="entry name" value="tRNA_SAD"/>
    <property type="match status" value="1"/>
</dbReference>
<dbReference type="SUPFAM" id="SSF55681">
    <property type="entry name" value="Class II aaRS and biotin synthetases"/>
    <property type="match status" value="1"/>
</dbReference>
<dbReference type="SUPFAM" id="SSF101353">
    <property type="entry name" value="Putative anticodon-binding domain of alanyl-tRNA synthetase (AlaRS)"/>
    <property type="match status" value="1"/>
</dbReference>
<dbReference type="SUPFAM" id="SSF55186">
    <property type="entry name" value="ThrRS/AlaRS common domain"/>
    <property type="match status" value="1"/>
</dbReference>
<dbReference type="SUPFAM" id="SSF50447">
    <property type="entry name" value="Translation proteins"/>
    <property type="match status" value="1"/>
</dbReference>
<dbReference type="PROSITE" id="PS50860">
    <property type="entry name" value="AA_TRNA_LIGASE_II_ALA"/>
    <property type="match status" value="1"/>
</dbReference>
<sequence length="906" mass="102536">MTLDEEYLDITFLTENGFVRKRCPKCGKHFWTADPEREICGDPPCESYSFIGNPVFKKPFELDEMREYYLNFFERRGHGRIERYPVVARWRTDIYLTIASIADFQPFVTSGVAPPPANPLTISQPCIRLDDLDSVGRTGRHLTLFEMMAHHAFNYPGKEIYWKNETVAYCTELLNELGVKKEDIVYKEEPWAGGGNAGPCLEAIVGGLEVATLVFMNLEEHPEGDIEIKGARYRKMDNYIVDTGYGLERFVWASKGTPTVYDAIFPEVVDTIIDNSNVSFNREDERVRRIVAESSKLAGIMGELRGERLNQLRKSVADTVGVSVEELEGIVVPLEKVYSLADHTRCILFMLGDGLVPSNAGAGYLARLMIRRSLRLAEELELGLDLYDLVEMHKKILGFEFDVPLSTVQEILELEKERYRTTVSKGTRLVERLVERKKKLEKDDLIELYDSHGIPVELAVGIAAEKGAEVEMPKDIYAELAKRHSKAEKVQEKKITLQNEYPATEKLYYDDPTLLEFEAEVIGVEGDFVILNRSAFYPESGGQDNDVGYLIANGGKFEVVDVLEADGVVLHVVKGAKPEVGTKVKGVIDSDVRWRHMRHHSATHVLLYSLQKVLGNHVWQAGARKEFSKARLDVTHFRRPSEEEIKEIEMLANREILANKPIKWEWMDRIEAERKFGFRLYQGGVPPGRKIRVVQVGDDVQACGGTHCRSTGEIGMLKILKVESIQDGVIRFEFAAGEAAIEAVEEMERLLREASSILRVEPAKLPKTVERFFEEWKDQRKEIERLKSVIADLWADILMERAEEFDSMKVVAEVVDADMQALQKLAERLAEKGAVGCLMAKGEGKVFVVTFSGQKYDARELLREIGRVAKGSGGGRKDVAQGAVQQLLDREEMLDVIFRFLSEHEG</sequence>
<protein>
    <recommendedName>
        <fullName>Alanine--tRNA ligase</fullName>
        <ecNumber>6.1.1.7</ecNumber>
    </recommendedName>
    <alternativeName>
        <fullName>Alanyl-tRNA synthetase</fullName>
        <shortName>AlaRS</shortName>
    </alternativeName>
</protein>
<organism>
    <name type="scientific">Archaeoglobus fulgidus (strain ATCC 49558 / DSM 4304 / JCM 9628 / NBRC 100126 / VC-16)</name>
    <dbReference type="NCBI Taxonomy" id="224325"/>
    <lineage>
        <taxon>Archaea</taxon>
        <taxon>Methanobacteriati</taxon>
        <taxon>Methanobacteriota</taxon>
        <taxon>Archaeoglobi</taxon>
        <taxon>Archaeoglobales</taxon>
        <taxon>Archaeoglobaceae</taxon>
        <taxon>Archaeoglobus</taxon>
    </lineage>
</organism>
<feature type="chain" id="PRO_0000075260" description="Alanine--tRNA ligase">
    <location>
        <begin position="1"/>
        <end position="906"/>
    </location>
</feature>
<feature type="binding site">
    <location>
        <position position="600"/>
    </location>
    <ligand>
        <name>Zn(2+)</name>
        <dbReference type="ChEBI" id="CHEBI:29105"/>
    </ligand>
</feature>
<feature type="binding site">
    <location>
        <position position="604"/>
    </location>
    <ligand>
        <name>Zn(2+)</name>
        <dbReference type="ChEBI" id="CHEBI:29105"/>
    </ligand>
</feature>
<feature type="binding site">
    <location>
        <position position="703"/>
    </location>
    <ligand>
        <name>Zn(2+)</name>
        <dbReference type="ChEBI" id="CHEBI:29105"/>
    </ligand>
</feature>
<feature type="binding site">
    <location>
        <position position="707"/>
    </location>
    <ligand>
        <name>Zn(2+)</name>
        <dbReference type="ChEBI" id="CHEBI:29105"/>
    </ligand>
</feature>
<feature type="mutagenesis site" description="Loss of tRNA editing activity." evidence="2">
    <original>C</original>
    <variation>A</variation>
    <location>
        <position position="703"/>
    </location>
</feature>
<feature type="helix" evidence="5">
    <location>
        <begin position="3"/>
        <end position="7"/>
    </location>
</feature>
<feature type="helix" evidence="5">
    <location>
        <begin position="11"/>
        <end position="14"/>
    </location>
</feature>
<feature type="turn" evidence="5">
    <location>
        <begin position="15"/>
        <end position="17"/>
    </location>
</feature>
<feature type="strand" evidence="5">
    <location>
        <begin position="19"/>
        <end position="21"/>
    </location>
</feature>
<feature type="strand" evidence="5">
    <location>
        <begin position="25"/>
        <end position="28"/>
    </location>
</feature>
<feature type="strand" evidence="5">
    <location>
        <begin position="30"/>
        <end position="32"/>
    </location>
</feature>
<feature type="strand" evidence="8">
    <location>
        <begin position="35"/>
        <end position="38"/>
    </location>
</feature>
<feature type="strand" evidence="5">
    <location>
        <begin position="42"/>
        <end position="45"/>
    </location>
</feature>
<feature type="strand" evidence="5">
    <location>
        <begin position="55"/>
        <end position="58"/>
    </location>
</feature>
<feature type="helix" evidence="5">
    <location>
        <begin position="62"/>
        <end position="74"/>
    </location>
</feature>
<feature type="turn" evidence="5">
    <location>
        <begin position="75"/>
        <end position="77"/>
    </location>
</feature>
<feature type="strand" evidence="5">
    <location>
        <begin position="92"/>
        <end position="96"/>
    </location>
</feature>
<feature type="helix" evidence="5">
    <location>
        <begin position="100"/>
        <end position="104"/>
    </location>
</feature>
<feature type="turn" evidence="5">
    <location>
        <begin position="105"/>
        <end position="110"/>
    </location>
</feature>
<feature type="strand" evidence="5">
    <location>
        <begin position="111"/>
        <end position="113"/>
    </location>
</feature>
<feature type="strand" evidence="5">
    <location>
        <begin position="116"/>
        <end position="127"/>
    </location>
</feature>
<feature type="helix" evidence="5">
    <location>
        <begin position="129"/>
        <end position="134"/>
    </location>
</feature>
<feature type="turn" evidence="5">
    <location>
        <begin position="135"/>
        <end position="137"/>
    </location>
</feature>
<feature type="strand" evidence="5">
    <location>
        <begin position="138"/>
        <end position="140"/>
    </location>
</feature>
<feature type="strand" evidence="5">
    <location>
        <begin position="143"/>
        <end position="155"/>
    </location>
</feature>
<feature type="helix" evidence="5">
    <location>
        <begin position="163"/>
        <end position="176"/>
    </location>
</feature>
<feature type="helix" evidence="5">
    <location>
        <begin position="181"/>
        <end position="183"/>
    </location>
</feature>
<feature type="strand" evidence="5">
    <location>
        <begin position="185"/>
        <end position="193"/>
    </location>
</feature>
<feature type="strand" evidence="5">
    <location>
        <begin position="196"/>
        <end position="205"/>
    </location>
</feature>
<feature type="strand" evidence="5">
    <location>
        <begin position="208"/>
        <end position="220"/>
    </location>
</feature>
<feature type="strand" evidence="5">
    <location>
        <begin position="226"/>
        <end position="228"/>
    </location>
</feature>
<feature type="strand" evidence="5">
    <location>
        <begin position="231"/>
        <end position="246"/>
    </location>
</feature>
<feature type="helix" evidence="5">
    <location>
        <begin position="247"/>
        <end position="255"/>
    </location>
</feature>
<feature type="helix" evidence="5">
    <location>
        <begin position="260"/>
        <end position="264"/>
    </location>
</feature>
<feature type="helix" evidence="5">
    <location>
        <begin position="266"/>
        <end position="274"/>
    </location>
</feature>
<feature type="strand" evidence="7">
    <location>
        <begin position="282"/>
        <end position="284"/>
    </location>
</feature>
<feature type="helix" evidence="5">
    <location>
        <begin position="285"/>
        <end position="301"/>
    </location>
</feature>
<feature type="helix" evidence="5">
    <location>
        <begin position="307"/>
        <end position="320"/>
    </location>
</feature>
<feature type="helix" evidence="5">
    <location>
        <begin position="324"/>
        <end position="352"/>
    </location>
</feature>
<feature type="helix" evidence="5">
    <location>
        <begin position="361"/>
        <end position="379"/>
    </location>
</feature>
<feature type="helix" evidence="5">
    <location>
        <begin position="386"/>
        <end position="397"/>
    </location>
</feature>
<feature type="helix" evidence="5">
    <location>
        <begin position="405"/>
        <end position="437"/>
    </location>
</feature>
<feature type="helix" evidence="5">
    <location>
        <begin position="442"/>
        <end position="452"/>
    </location>
</feature>
<feature type="helix" evidence="5">
    <location>
        <begin position="456"/>
        <end position="465"/>
    </location>
</feature>
<feature type="helix" evidence="5">
    <location>
        <begin position="476"/>
        <end position="482"/>
    </location>
</feature>
<feature type="turn" evidence="5">
    <location>
        <begin position="508"/>
        <end position="510"/>
    </location>
</feature>
<feature type="strand" evidence="5">
    <location>
        <begin position="516"/>
        <end position="525"/>
    </location>
</feature>
<feature type="strand" evidence="5">
    <location>
        <begin position="528"/>
        <end position="534"/>
    </location>
</feature>
<feature type="strand" evidence="5">
    <location>
        <begin position="548"/>
        <end position="552"/>
    </location>
</feature>
<feature type="strand" evidence="5">
    <location>
        <begin position="555"/>
        <end position="559"/>
    </location>
</feature>
<feature type="strand" evidence="5">
    <location>
        <begin position="561"/>
        <end position="565"/>
    </location>
</feature>
<feature type="strand" evidence="5">
    <location>
        <begin position="568"/>
        <end position="572"/>
    </location>
</feature>
<feature type="strand" evidence="5">
    <location>
        <begin position="583"/>
        <end position="588"/>
    </location>
</feature>
<feature type="helix" evidence="5">
    <location>
        <begin position="590"/>
        <end position="614"/>
    </location>
</feature>
<feature type="strand" evidence="5">
    <location>
        <begin position="620"/>
        <end position="622"/>
    </location>
</feature>
<feature type="strand" evidence="5">
    <location>
        <begin position="631"/>
        <end position="635"/>
    </location>
</feature>
<feature type="helix" evidence="5">
    <location>
        <begin position="642"/>
        <end position="657"/>
    </location>
</feature>
<feature type="strand" evidence="5">
    <location>
        <begin position="661"/>
        <end position="668"/>
    </location>
</feature>
<feature type="helix" evidence="5">
    <location>
        <begin position="669"/>
        <end position="676"/>
    </location>
</feature>
<feature type="helix" evidence="5">
    <location>
        <begin position="678"/>
        <end position="681"/>
    </location>
</feature>
<feature type="strand" evidence="5">
    <location>
        <begin position="688"/>
        <end position="696"/>
    </location>
</feature>
<feature type="strand" evidence="5">
    <location>
        <begin position="699"/>
        <end position="702"/>
    </location>
</feature>
<feature type="helix" evidence="5">
    <location>
        <begin position="711"/>
        <end position="714"/>
    </location>
</feature>
<feature type="strand" evidence="5">
    <location>
        <begin position="717"/>
        <end position="726"/>
    </location>
</feature>
<feature type="strand" evidence="5">
    <location>
        <begin position="729"/>
        <end position="737"/>
    </location>
</feature>
<feature type="helix" evidence="6">
    <location>
        <begin position="738"/>
        <end position="740"/>
    </location>
</feature>
<feature type="helix" evidence="6">
    <location>
        <begin position="742"/>
        <end position="756"/>
    </location>
</feature>
<feature type="turn" evidence="6">
    <location>
        <begin position="757"/>
        <end position="759"/>
    </location>
</feature>
<feature type="helix" evidence="7">
    <location>
        <begin position="762"/>
        <end position="764"/>
    </location>
</feature>
<feature type="helix" evidence="6">
    <location>
        <begin position="765"/>
        <end position="799"/>
    </location>
</feature>
<feature type="strand" evidence="6">
    <location>
        <begin position="803"/>
        <end position="807"/>
    </location>
</feature>
<feature type="strand" evidence="6">
    <location>
        <begin position="809"/>
        <end position="814"/>
    </location>
</feature>
<feature type="helix" evidence="6">
    <location>
        <begin position="819"/>
        <end position="831"/>
    </location>
</feature>
<feature type="strand" evidence="6">
    <location>
        <begin position="834"/>
        <end position="841"/>
    </location>
</feature>
<feature type="strand" evidence="6">
    <location>
        <begin position="843"/>
        <end position="856"/>
    </location>
</feature>
<feature type="helix" evidence="6">
    <location>
        <begin position="858"/>
        <end position="869"/>
    </location>
</feature>
<feature type="strand" evidence="7">
    <location>
        <begin position="871"/>
        <end position="875"/>
    </location>
</feature>
<feature type="strand" evidence="6">
    <location>
        <begin position="877"/>
        <end position="886"/>
    </location>
</feature>
<feature type="helix" evidence="6">
    <location>
        <begin position="890"/>
        <end position="904"/>
    </location>
</feature>
<comment type="function">
    <text evidence="3">Catalyzes the attachment of alanine to tRNA(Ala) in a two-step reaction: alanine is first activated by ATP to form Ala-AMP and then transferred to the acceptor end of tRNA(Ala). Incorrectly charged aminoacyl-tRNA(Ala) is also edited in situ by the editing domain.</text>
</comment>
<comment type="catalytic activity">
    <reaction>
        <text>tRNA(Ala) + L-alanine + ATP = L-alanyl-tRNA(Ala) + AMP + diphosphate</text>
        <dbReference type="Rhea" id="RHEA:12540"/>
        <dbReference type="Rhea" id="RHEA-COMP:9657"/>
        <dbReference type="Rhea" id="RHEA-COMP:9923"/>
        <dbReference type="ChEBI" id="CHEBI:30616"/>
        <dbReference type="ChEBI" id="CHEBI:33019"/>
        <dbReference type="ChEBI" id="CHEBI:57972"/>
        <dbReference type="ChEBI" id="CHEBI:78442"/>
        <dbReference type="ChEBI" id="CHEBI:78497"/>
        <dbReference type="ChEBI" id="CHEBI:456215"/>
        <dbReference type="EC" id="6.1.1.7"/>
    </reaction>
</comment>
<comment type="cofactor">
    <cofactor evidence="3">
        <name>Zn(2+)</name>
        <dbReference type="ChEBI" id="CHEBI:29105"/>
    </cofactor>
    <text evidence="3">Binds 1 zinc ion per subunit.</text>
</comment>
<comment type="subunit">
    <text evidence="3">Homodimer.</text>
</comment>
<comment type="interaction">
    <interactant intactId="EBI-15779415">
        <id>O28029</id>
    </interactant>
    <interactant intactId="EBI-15779415">
        <id>O28029</id>
        <label>alaS</label>
    </interactant>
    <organismsDiffer>false</organismsDiffer>
    <experiments>3</experiments>
</comment>
<comment type="subcellular location">
    <subcellularLocation>
        <location evidence="1">Cytoplasm</location>
    </subcellularLocation>
</comment>
<comment type="domain">
    <text evidence="3">Consists of three domains; the N-terminal catalytic domain, the editing domain and the C-terminal C-Ala domain. The editing domain removes incorrectly charged amino acids, while the C-Ala domain, along with tRNA(Ala), serves as a bridge to cooperatively bring together the editing and aminoacylation centers thus stimulating deacylation of misacylated tRNAs.</text>
</comment>
<comment type="similarity">
    <text evidence="4">Belongs to the class-II aminoacyl-tRNA synthetase family.</text>
</comment>
<accession>O28029</accession>
<proteinExistence type="evidence at protein level"/>